<accession>Q84CZ9</accession>
<organism>
    <name type="scientific">Neisseria meningitidis serogroup A</name>
    <dbReference type="NCBI Taxonomy" id="65699"/>
    <lineage>
        <taxon>Bacteria</taxon>
        <taxon>Pseudomonadati</taxon>
        <taxon>Pseudomonadota</taxon>
        <taxon>Betaproteobacteria</taxon>
        <taxon>Neisseriales</taxon>
        <taxon>Neisseriaceae</taxon>
        <taxon>Neisseria</taxon>
    </lineage>
</organism>
<reference key="1">
    <citation type="journal article" date="2004" name="J. Clin. Microbiol.">
        <title>Use of real-time PCR to resolve slide agglutination discrepancies in serogroup identification of Neisseria meningitidis.</title>
        <authorList>
            <person name="Mothershed E.A."/>
            <person name="Sacchi C.T."/>
            <person name="Whitney A.M."/>
            <person name="Barnett G.A."/>
            <person name="Ajello G.W."/>
            <person name="Schmink S."/>
            <person name="Mayer L.W."/>
            <person name="Phelan M."/>
            <person name="Taylor T.H. Jr."/>
            <person name="Bernhardt S.A."/>
            <person name="Rosenstein N.E."/>
            <person name="Popovic T."/>
        </authorList>
    </citation>
    <scope>NUCLEOTIDE SEQUENCE [GENOMIC DNA]</scope>
    <source>
        <strain>M2677 / Serogroup A</strain>
    </source>
</reference>
<reference key="2">
    <citation type="journal article" date="2005" name="PLoS Comput. Biol.">
        <title>Stealth proteins: in silico identification of a novel protein family rendering bacterial pathogens invisible to host immune defense.</title>
        <authorList>
            <person name="Sperisen P."/>
            <person name="Schmid C.D."/>
            <person name="Bucher P."/>
            <person name="Zilian O."/>
        </authorList>
    </citation>
    <scope>IDENTIFICATION AS A STEALTH PROTEIN</scope>
    <scope>PREDICTION OF FUNCTION</scope>
</reference>
<dbReference type="EC" id="2.7.-.-"/>
<dbReference type="EMBL" id="AY234204">
    <property type="protein sequence ID" value="AAO85302.1"/>
    <property type="molecule type" value="Genomic_DNA"/>
</dbReference>
<dbReference type="GO" id="GO:0016772">
    <property type="term" value="F:transferase activity, transferring phosphorus-containing groups"/>
    <property type="evidence" value="ECO:0007669"/>
    <property type="project" value="InterPro"/>
</dbReference>
<dbReference type="GO" id="GO:0000271">
    <property type="term" value="P:polysaccharide biosynthetic process"/>
    <property type="evidence" value="ECO:0007669"/>
    <property type="project" value="UniProtKB-KW"/>
</dbReference>
<dbReference type="InterPro" id="IPR047141">
    <property type="entry name" value="Stealth"/>
</dbReference>
<dbReference type="InterPro" id="IPR031358">
    <property type="entry name" value="Stealth_CR1"/>
</dbReference>
<dbReference type="InterPro" id="IPR021520">
    <property type="entry name" value="Stealth_CR2"/>
</dbReference>
<dbReference type="InterPro" id="IPR031357">
    <property type="entry name" value="Stealth_CR3"/>
</dbReference>
<dbReference type="InterPro" id="IPR031356">
    <property type="entry name" value="Stealth_CR4"/>
</dbReference>
<dbReference type="PANTHER" id="PTHR24045">
    <property type="match status" value="1"/>
</dbReference>
<dbReference type="PANTHER" id="PTHR24045:SF0">
    <property type="entry name" value="N-ACETYLGLUCOSAMINE-1-PHOSPHOTRANSFERASE SUBUNITS ALPHA_BETA"/>
    <property type="match status" value="1"/>
</dbReference>
<dbReference type="Pfam" id="PF17101">
    <property type="entry name" value="Stealth_CR1"/>
    <property type="match status" value="1"/>
</dbReference>
<dbReference type="Pfam" id="PF11380">
    <property type="entry name" value="Stealth_CR2"/>
    <property type="match status" value="1"/>
</dbReference>
<dbReference type="Pfam" id="PF17102">
    <property type="entry name" value="Stealth_CR3"/>
    <property type="match status" value="1"/>
</dbReference>
<dbReference type="Pfam" id="PF17103">
    <property type="entry name" value="Stealth_CR4"/>
    <property type="match status" value="1"/>
</dbReference>
<gene>
    <name type="primary">sacB</name>
</gene>
<evidence type="ECO:0000250" key="1"/>
<evidence type="ECO:0000305" key="2"/>
<keyword id="KW-0270">Exopolysaccharide synthesis</keyword>
<keyword id="KW-0808">Transferase</keyword>
<sequence length="545" mass="64130">MFILNNRKWRKLKRDPSAFFRDSKFNFLRYFSAKKFAKNFKNSSHIHKTNISKAQSNISSTLKQNRKQDMLIPINFFNFEYIVKKLNNQNAIGVYILPSNLTLKPALCILESHKEDFLNKFLLTISSENLKLQYKFNGQIKNPKSVNEIWTDLFSIAHVDMKLSTDRTLSSSISQFWFRLEFCKEDKDFILFPTANRYSRKLWKHSIKNNQLFKEGIRNYSEISSLPYEEDHNFDIDLVFTWVNSEDKNWQELYKKYKPDFNSDATSTSRFLSRDELKFALRSWEMNGSFIRKIFIVSNCAPPAWLDLNNPKIQWVYHEEIMPQSALPTFSSHAIETSLHHIPGISNYFIYSNXDFLLTKPLNKDNFFYSNGIAKLRLEAWGNVNGECTEGEPDYLNGARNANTLLEKEFKKFTTKLHTHSPQSMRTDILFEMEKKYPEEFNRTLHNKFRSLDDIAVTGYLYHHYALLSGRALQSSDKTELVQQNHDFKKKLNNVVTLTKERNFDKLPLSVCINDGADSHLNEEWNVQVIKFLETLFPLPSSFEK</sequence>
<protein>
    <recommendedName>
        <fullName>Capsular polysaccharide phosphotransferase SacB</fullName>
        <ecNumber>2.7.-.-</ecNumber>
    </recommendedName>
    <alternativeName>
        <fullName>Stealth protein SacB</fullName>
    </alternativeName>
</protein>
<feature type="chain" id="PRO_0000235953" description="Capsular polysaccharide phosphotransferase SacB">
    <location>
        <begin position="1"/>
        <end position="545"/>
    </location>
</feature>
<name>SACB4_NEIMD</name>
<proteinExistence type="inferred from homology"/>
<comment type="function">
    <text evidence="1">May be the polymerase that links individual UDP-N-acetyl-D-mannosamine monomers. In serotype A the capsule is composed of repeated units of (alpha 1-6)-linked N-acetyl-D-mannosamine-1-phosphate (By similarity).</text>
</comment>
<comment type="miscellaneous">
    <text>Stealth proteins are part of a protein family that is conserved from bacteria to higher eukaryotes. Family members were first identified in microbes as proteins that help pathogens to elude the host innate immune system. Microbial stealth proteins are involved in the biosynthesis of exopolysaccharides. Stealth proteins are predicted to function as hexose-1-phosphoryltransferases.</text>
</comment>
<comment type="similarity">
    <text evidence="2">Belongs to the stealth family.</text>
</comment>